<feature type="chain" id="PRO_0000298085" description="Cell division topological specificity factor">
    <location>
        <begin position="1"/>
        <end position="82"/>
    </location>
</feature>
<keyword id="KW-0131">Cell cycle</keyword>
<keyword id="KW-0132">Cell division</keyword>
<keyword id="KW-1185">Reference proteome</keyword>
<organism>
    <name type="scientific">Buchnera aphidicola subsp. Cinara cedri (strain Cc)</name>
    <dbReference type="NCBI Taxonomy" id="372461"/>
    <lineage>
        <taxon>Bacteria</taxon>
        <taxon>Pseudomonadati</taxon>
        <taxon>Pseudomonadota</taxon>
        <taxon>Gammaproteobacteria</taxon>
        <taxon>Enterobacterales</taxon>
        <taxon>Erwiniaceae</taxon>
        <taxon>Buchnera</taxon>
    </lineage>
</organism>
<reference key="1">
    <citation type="journal article" date="2006" name="Science">
        <title>A small microbial genome: the end of a long symbiotic relationship?</title>
        <authorList>
            <person name="Perez-Brocal V."/>
            <person name="Gil R."/>
            <person name="Ramos S."/>
            <person name="Lamelas A."/>
            <person name="Postigo M."/>
            <person name="Michelena J.M."/>
            <person name="Silva F.J."/>
            <person name="Moya A."/>
            <person name="Latorre A."/>
        </authorList>
    </citation>
    <scope>NUCLEOTIDE SEQUENCE [LARGE SCALE GENOMIC DNA]</scope>
    <source>
        <strain>Cc</strain>
    </source>
</reference>
<dbReference type="EMBL" id="CP000263">
    <property type="protein sequence ID" value="ABJ90675.1"/>
    <property type="molecule type" value="Genomic_DNA"/>
</dbReference>
<dbReference type="RefSeq" id="WP_011672594.1">
    <property type="nucleotide sequence ID" value="NC_008513.1"/>
</dbReference>
<dbReference type="SMR" id="Q057M4"/>
<dbReference type="STRING" id="372461.BCc_203"/>
<dbReference type="KEGG" id="bcc:BCc_203"/>
<dbReference type="eggNOG" id="COG0851">
    <property type="taxonomic scope" value="Bacteria"/>
</dbReference>
<dbReference type="HOGENOM" id="CLU_137929_2_2_6"/>
<dbReference type="OrthoDB" id="9802655at2"/>
<dbReference type="Proteomes" id="UP000000669">
    <property type="component" value="Chromosome"/>
</dbReference>
<dbReference type="GO" id="GO:0051301">
    <property type="term" value="P:cell division"/>
    <property type="evidence" value="ECO:0007669"/>
    <property type="project" value="UniProtKB-KW"/>
</dbReference>
<dbReference type="GO" id="GO:0032955">
    <property type="term" value="P:regulation of division septum assembly"/>
    <property type="evidence" value="ECO:0007669"/>
    <property type="project" value="InterPro"/>
</dbReference>
<dbReference type="Gene3D" id="3.30.1070.10">
    <property type="entry name" value="Cell division topological specificity factor MinE"/>
    <property type="match status" value="1"/>
</dbReference>
<dbReference type="HAMAP" id="MF_00262">
    <property type="entry name" value="MinE"/>
    <property type="match status" value="1"/>
</dbReference>
<dbReference type="InterPro" id="IPR005527">
    <property type="entry name" value="MinE"/>
</dbReference>
<dbReference type="InterPro" id="IPR036707">
    <property type="entry name" value="MinE_sf"/>
</dbReference>
<dbReference type="NCBIfam" id="TIGR01215">
    <property type="entry name" value="minE"/>
    <property type="match status" value="1"/>
</dbReference>
<dbReference type="NCBIfam" id="NF001422">
    <property type="entry name" value="PRK00296.1"/>
    <property type="match status" value="1"/>
</dbReference>
<dbReference type="Pfam" id="PF03776">
    <property type="entry name" value="MinE"/>
    <property type="match status" value="1"/>
</dbReference>
<dbReference type="SUPFAM" id="SSF55229">
    <property type="entry name" value="Cell division protein MinE topological specificity domain"/>
    <property type="match status" value="1"/>
</dbReference>
<proteinExistence type="inferred from homology"/>
<sequence length="82" mass="9753">MILNLFISKKQYTASLAKKRLKTLIKKKKKFFYQSSYLPQLKNDLLLVIAKYIKIQPNKMSIQIEKRKKNLLILEINITNVK</sequence>
<accession>Q057M4</accession>
<name>MINE_BUCCC</name>
<protein>
    <recommendedName>
        <fullName evidence="1">Cell division topological specificity factor</fullName>
    </recommendedName>
</protein>
<evidence type="ECO:0000255" key="1">
    <source>
        <dbReference type="HAMAP-Rule" id="MF_00262"/>
    </source>
</evidence>
<comment type="function">
    <text evidence="1">Prevents the cell division inhibition by proteins MinC and MinD at internal division sites while permitting inhibition at polar sites. This ensures cell division at the proper site by restricting the formation of a division septum at the midpoint of the long axis of the cell.</text>
</comment>
<comment type="similarity">
    <text evidence="1">Belongs to the MinE family.</text>
</comment>
<gene>
    <name evidence="1" type="primary">minE</name>
    <name type="ordered locus">BCc_203</name>
</gene>